<keyword id="KW-0046">Antibiotic resistance</keyword>
<keyword id="KW-0997">Cell inner membrane</keyword>
<keyword id="KW-1003">Cell membrane</keyword>
<keyword id="KW-0133">Cell shape</keyword>
<keyword id="KW-0961">Cell wall biogenesis/degradation</keyword>
<keyword id="KW-0378">Hydrolase</keyword>
<keyword id="KW-0472">Membrane</keyword>
<keyword id="KW-0573">Peptidoglycan synthesis</keyword>
<keyword id="KW-1185">Reference proteome</keyword>
<keyword id="KW-0812">Transmembrane</keyword>
<keyword id="KW-1133">Transmembrane helix</keyword>
<reference key="1">
    <citation type="journal article" date="2005" name="Nucleic Acids Res.">
        <title>Genome dynamics and diversity of Shigella species, the etiologic agents of bacillary dysentery.</title>
        <authorList>
            <person name="Yang F."/>
            <person name="Yang J."/>
            <person name="Zhang X."/>
            <person name="Chen L."/>
            <person name="Jiang Y."/>
            <person name="Yan Y."/>
            <person name="Tang X."/>
            <person name="Wang J."/>
            <person name="Xiong Z."/>
            <person name="Dong J."/>
            <person name="Xue Y."/>
            <person name="Zhu Y."/>
            <person name="Xu X."/>
            <person name="Sun L."/>
            <person name="Chen S."/>
            <person name="Nie H."/>
            <person name="Peng J."/>
            <person name="Xu J."/>
            <person name="Wang Y."/>
            <person name="Yuan Z."/>
            <person name="Wen Y."/>
            <person name="Yao Z."/>
            <person name="Shen Y."/>
            <person name="Qiang B."/>
            <person name="Hou Y."/>
            <person name="Yu J."/>
            <person name="Jin Q."/>
        </authorList>
    </citation>
    <scope>NUCLEOTIDE SEQUENCE [LARGE SCALE GENOMIC DNA]</scope>
    <source>
        <strain>Ss046</strain>
    </source>
</reference>
<proteinExistence type="inferred from homology"/>
<protein>
    <recommendedName>
        <fullName evidence="1">Undecaprenyl-diphosphatase</fullName>
        <ecNumber evidence="1">3.6.1.27</ecNumber>
    </recommendedName>
    <alternativeName>
        <fullName evidence="1">Bacitracin resistance protein</fullName>
    </alternativeName>
    <alternativeName>
        <fullName evidence="1">Undecaprenyl pyrophosphate phosphatase</fullName>
    </alternativeName>
</protein>
<comment type="function">
    <text evidence="1">Catalyzes the dephosphorylation of undecaprenyl diphosphate (UPP). Confers resistance to bacitracin.</text>
</comment>
<comment type="catalytic activity">
    <reaction evidence="1">
        <text>di-trans,octa-cis-undecaprenyl diphosphate + H2O = di-trans,octa-cis-undecaprenyl phosphate + phosphate + H(+)</text>
        <dbReference type="Rhea" id="RHEA:28094"/>
        <dbReference type="ChEBI" id="CHEBI:15377"/>
        <dbReference type="ChEBI" id="CHEBI:15378"/>
        <dbReference type="ChEBI" id="CHEBI:43474"/>
        <dbReference type="ChEBI" id="CHEBI:58405"/>
        <dbReference type="ChEBI" id="CHEBI:60392"/>
        <dbReference type="EC" id="3.6.1.27"/>
    </reaction>
</comment>
<comment type="subcellular location">
    <subcellularLocation>
        <location evidence="1">Cell inner membrane</location>
        <topology evidence="1">Multi-pass membrane protein</topology>
    </subcellularLocation>
</comment>
<comment type="miscellaneous">
    <text>Bacitracin is thought to be involved in the inhibition of peptidoglycan synthesis by sequestering undecaprenyl diphosphate, thereby reducing the pool of lipid carrier available.</text>
</comment>
<comment type="similarity">
    <text evidence="1">Belongs to the UppP family.</text>
</comment>
<name>UPPP_SHISS</name>
<dbReference type="EC" id="3.6.1.27" evidence="1"/>
<dbReference type="EMBL" id="CP000038">
    <property type="protein sequence ID" value="AAZ89777.1"/>
    <property type="molecule type" value="Genomic_DNA"/>
</dbReference>
<dbReference type="RefSeq" id="WP_005137087.1">
    <property type="nucleotide sequence ID" value="NC_007384.1"/>
</dbReference>
<dbReference type="SMR" id="Q3YXI5"/>
<dbReference type="GeneID" id="93778936"/>
<dbReference type="KEGG" id="ssn:SSON_3194"/>
<dbReference type="HOGENOM" id="CLU_060296_2_0_6"/>
<dbReference type="Proteomes" id="UP000002529">
    <property type="component" value="Chromosome"/>
</dbReference>
<dbReference type="GO" id="GO:0005886">
    <property type="term" value="C:plasma membrane"/>
    <property type="evidence" value="ECO:0007669"/>
    <property type="project" value="UniProtKB-SubCell"/>
</dbReference>
<dbReference type="GO" id="GO:0050380">
    <property type="term" value="F:undecaprenyl-diphosphatase activity"/>
    <property type="evidence" value="ECO:0007669"/>
    <property type="project" value="UniProtKB-UniRule"/>
</dbReference>
<dbReference type="GO" id="GO:0071555">
    <property type="term" value="P:cell wall organization"/>
    <property type="evidence" value="ECO:0007669"/>
    <property type="project" value="UniProtKB-KW"/>
</dbReference>
<dbReference type="GO" id="GO:0009252">
    <property type="term" value="P:peptidoglycan biosynthetic process"/>
    <property type="evidence" value="ECO:0007669"/>
    <property type="project" value="UniProtKB-KW"/>
</dbReference>
<dbReference type="GO" id="GO:0008360">
    <property type="term" value="P:regulation of cell shape"/>
    <property type="evidence" value="ECO:0007669"/>
    <property type="project" value="UniProtKB-KW"/>
</dbReference>
<dbReference type="GO" id="GO:0046677">
    <property type="term" value="P:response to antibiotic"/>
    <property type="evidence" value="ECO:0007669"/>
    <property type="project" value="UniProtKB-UniRule"/>
</dbReference>
<dbReference type="HAMAP" id="MF_01006">
    <property type="entry name" value="Undec_diphosphatase"/>
    <property type="match status" value="1"/>
</dbReference>
<dbReference type="InterPro" id="IPR003824">
    <property type="entry name" value="UppP"/>
</dbReference>
<dbReference type="NCBIfam" id="NF001388">
    <property type="entry name" value="PRK00281.1-1"/>
    <property type="match status" value="1"/>
</dbReference>
<dbReference type="NCBIfam" id="NF001389">
    <property type="entry name" value="PRK00281.1-2"/>
    <property type="match status" value="1"/>
</dbReference>
<dbReference type="NCBIfam" id="NF001390">
    <property type="entry name" value="PRK00281.1-4"/>
    <property type="match status" value="1"/>
</dbReference>
<dbReference type="NCBIfam" id="TIGR00753">
    <property type="entry name" value="undec_PP_bacA"/>
    <property type="match status" value="1"/>
</dbReference>
<dbReference type="PANTHER" id="PTHR30622">
    <property type="entry name" value="UNDECAPRENYL-DIPHOSPHATASE"/>
    <property type="match status" value="1"/>
</dbReference>
<dbReference type="PANTHER" id="PTHR30622:SF3">
    <property type="entry name" value="UNDECAPRENYL-DIPHOSPHATASE"/>
    <property type="match status" value="1"/>
</dbReference>
<dbReference type="Pfam" id="PF02673">
    <property type="entry name" value="BacA"/>
    <property type="match status" value="1"/>
</dbReference>
<accession>Q3YXI5</accession>
<sequence length="273" mass="29763">MSDMHSLLIAAILGVVEGLTEFLPVSSTGHMIIVGHLLGFEGDTAKTFEVVIQLGSILAVVVMFWRRLFGLIGIHFGRPLQHEGESKGRLTLIHILLGMIPAVVLGLLFHDTIKSLFNPINVMYALVVGGLLLIAAECLKPKEPRAPGLDDMTYRQAFMIGCFQCLALWPGFSRSGATISGGMLMGVSRYAASEFSFLLAVPMMMGATALDLYKSWGFLTTGDISMFAVGFITAFVVALIAIKTFLQLIKRISFIPFAIYRFIVAAAVYVVFF</sequence>
<organism>
    <name type="scientific">Shigella sonnei (strain Ss046)</name>
    <dbReference type="NCBI Taxonomy" id="300269"/>
    <lineage>
        <taxon>Bacteria</taxon>
        <taxon>Pseudomonadati</taxon>
        <taxon>Pseudomonadota</taxon>
        <taxon>Gammaproteobacteria</taxon>
        <taxon>Enterobacterales</taxon>
        <taxon>Enterobacteriaceae</taxon>
        <taxon>Shigella</taxon>
    </lineage>
</organism>
<feature type="chain" id="PRO_0000227638" description="Undecaprenyl-diphosphatase">
    <location>
        <begin position="1"/>
        <end position="273"/>
    </location>
</feature>
<feature type="transmembrane region" description="Helical" evidence="1">
    <location>
        <begin position="6"/>
        <end position="26"/>
    </location>
</feature>
<feature type="transmembrane region" description="Helical" evidence="1">
    <location>
        <begin position="45"/>
        <end position="65"/>
    </location>
</feature>
<feature type="transmembrane region" description="Helical" evidence="1">
    <location>
        <begin position="90"/>
        <end position="110"/>
    </location>
</feature>
<feature type="transmembrane region" description="Helical" evidence="1">
    <location>
        <begin position="116"/>
        <end position="136"/>
    </location>
</feature>
<feature type="transmembrane region" description="Helical" evidence="1">
    <location>
        <begin position="190"/>
        <end position="210"/>
    </location>
</feature>
<feature type="transmembrane region" description="Helical" evidence="1">
    <location>
        <begin position="222"/>
        <end position="242"/>
    </location>
</feature>
<feature type="transmembrane region" description="Helical" evidence="1">
    <location>
        <begin position="252"/>
        <end position="272"/>
    </location>
</feature>
<gene>
    <name evidence="1" type="primary">uppP</name>
    <name type="synonym">bacA</name>
    <name type="ordered locus">SSON_3194</name>
</gene>
<evidence type="ECO:0000255" key="1">
    <source>
        <dbReference type="HAMAP-Rule" id="MF_01006"/>
    </source>
</evidence>